<name>ATG11_ASPOR</name>
<accession>Q2UKQ2</accession>
<accession>A0A089ZZ96</accession>
<organism>
    <name type="scientific">Aspergillus oryzae (strain ATCC 42149 / RIB 40)</name>
    <name type="common">Yellow koji mold</name>
    <dbReference type="NCBI Taxonomy" id="510516"/>
    <lineage>
        <taxon>Eukaryota</taxon>
        <taxon>Fungi</taxon>
        <taxon>Dikarya</taxon>
        <taxon>Ascomycota</taxon>
        <taxon>Pezizomycotina</taxon>
        <taxon>Eurotiomycetes</taxon>
        <taxon>Eurotiomycetidae</taxon>
        <taxon>Eurotiales</taxon>
        <taxon>Aspergillaceae</taxon>
        <taxon>Aspergillus</taxon>
        <taxon>Aspergillus subgen. Circumdati</taxon>
    </lineage>
</organism>
<comment type="function">
    <text evidence="4">Selective autophagy-specific protein required for pexophagy and mitophagy (PubMed:26058532). In contrast to its Saccharomyces cerevisiae ATG11 ortholog, is not involved in non-selective autophagy nor in cytoplasm to vacuole transport (Cvt) (PubMed:26058532).</text>
</comment>
<comment type="subunit">
    <text evidence="1">Homodimer and potential homooligomers.</text>
</comment>
<comment type="subcellular location">
    <subcellularLocation>
        <location evidence="4">Preautophagosomal structure membrane</location>
        <topology evidence="4">Peripheral membrane protein</topology>
    </subcellularLocation>
</comment>
<comment type="disruption phenotype">
    <text evidence="4">Impairs pexophagy and mitophagy (PubMed:26058532). Does not affect non-selective autophagy nor the transport of ape1 to the vacuoles (PubMed:26058532).</text>
</comment>
<comment type="similarity">
    <text evidence="6">Belongs to the ATG11 family.</text>
</comment>
<comment type="sequence caution" evidence="6">
    <conflict type="erroneous initiation">
        <sequence resource="EMBL-CDS" id="BAP46866"/>
    </conflict>
    <text>Extended N-terminus.</text>
</comment>
<keyword id="KW-0072">Autophagy</keyword>
<keyword id="KW-0175">Coiled coil</keyword>
<keyword id="KW-0472">Membrane</keyword>
<keyword id="KW-0653">Protein transport</keyword>
<keyword id="KW-1185">Reference proteome</keyword>
<keyword id="KW-0813">Transport</keyword>
<reference key="1">
    <citation type="journal article" date="2015" name="Fungal Biol.">
        <title>Functional analysis of AoAtg11 in selective autophagy in the filamentous fungus Aspergillus oryzae.</title>
        <authorList>
            <person name="Tadokoro T."/>
            <person name="Kikuma T."/>
            <person name="Kitamoto K."/>
        </authorList>
    </citation>
    <scope>NUCLEOTIDE SEQUENCE [GENOMIC DNA]</scope>
    <scope>SUBCELLULAR LOCATION</scope>
    <scope>FUNCTION</scope>
    <scope>DISRUPTION PHENOTYPE</scope>
    <source>
        <strain>ATCC 42149 / RIB 40</strain>
    </source>
</reference>
<reference key="2">
    <citation type="journal article" date="2005" name="Nature">
        <title>Genome sequencing and analysis of Aspergillus oryzae.</title>
        <authorList>
            <person name="Machida M."/>
            <person name="Asai K."/>
            <person name="Sano M."/>
            <person name="Tanaka T."/>
            <person name="Kumagai T."/>
            <person name="Terai G."/>
            <person name="Kusumoto K."/>
            <person name="Arima T."/>
            <person name="Akita O."/>
            <person name="Kashiwagi Y."/>
            <person name="Abe K."/>
            <person name="Gomi K."/>
            <person name="Horiuchi H."/>
            <person name="Kitamoto K."/>
            <person name="Kobayashi T."/>
            <person name="Takeuchi M."/>
            <person name="Denning D.W."/>
            <person name="Galagan J.E."/>
            <person name="Nierman W.C."/>
            <person name="Yu J."/>
            <person name="Archer D.B."/>
            <person name="Bennett J.W."/>
            <person name="Bhatnagar D."/>
            <person name="Cleveland T.E."/>
            <person name="Fedorova N.D."/>
            <person name="Gotoh O."/>
            <person name="Horikawa H."/>
            <person name="Hosoyama A."/>
            <person name="Ichinomiya M."/>
            <person name="Igarashi R."/>
            <person name="Iwashita K."/>
            <person name="Juvvadi P.R."/>
            <person name="Kato M."/>
            <person name="Kato Y."/>
            <person name="Kin T."/>
            <person name="Kokubun A."/>
            <person name="Maeda H."/>
            <person name="Maeyama N."/>
            <person name="Maruyama J."/>
            <person name="Nagasaki H."/>
            <person name="Nakajima T."/>
            <person name="Oda K."/>
            <person name="Okada K."/>
            <person name="Paulsen I."/>
            <person name="Sakamoto K."/>
            <person name="Sawano T."/>
            <person name="Takahashi M."/>
            <person name="Takase K."/>
            <person name="Terabayashi Y."/>
            <person name="Wortman J.R."/>
            <person name="Yamada O."/>
            <person name="Yamagata Y."/>
            <person name="Anazawa H."/>
            <person name="Hata Y."/>
            <person name="Koide Y."/>
            <person name="Komori T."/>
            <person name="Koyama Y."/>
            <person name="Minetoki T."/>
            <person name="Suharnan S."/>
            <person name="Tanaka A."/>
            <person name="Isono K."/>
            <person name="Kuhara S."/>
            <person name="Ogasawara N."/>
            <person name="Kikuchi H."/>
        </authorList>
    </citation>
    <scope>NUCLEOTIDE SEQUENCE [LARGE SCALE GENOMIC DNA]</scope>
    <source>
        <strain>ATCC 42149 / RIB 40</strain>
    </source>
</reference>
<sequence length="1201" mass="135588">MARRTWAEGLTERCELIHKDIQERNERTDIINRAISVALENLKTHVGTLEHRFTEAQTWANDLLKEQHVALDGWERTFATLGNIPARKDFPFLGRPSTPTKGSDNSTGTLRDYLDTDEVHRAGSEAVDVSSRFARQVEDVEKAVGGIAADTQHLVDAAVPAGVDGVEGLLQEVETISRKIQSDYEHVLALPNNQKTLANISRLALSHTKDLLPSLLEVSAEIQTNLEEAARQYNAAVKAAFNHMRQISLIESRLADVQSQINNLNFQSDAFDVLYTVFHMPFVYGSILIESVRRREFSDKMKSDSLTLAEEMSVFQDEEQRRRKKWIKNMGDFVSMSDTTTPGIEVNLRGQEYEWPVVSRKEIEAYIEELKTKPGMASPVQELTQLYKELDAPTRLQRRRAKAFKQGSVFDLSRSSLLLRSDDMVRSLRDEKSKLEEKVKGSESRIRKLEDLLHRQSHMGRPASGNFSIDFPSSPASPHPDTLSRRSSVSSRRMSSNQSSEEKALVQRIVHLEAELAAERETVQKLQKDAHAERQSNTDKIQEVQSTKNDLIGNLEARQREFDDERRFLEGEMKKCRIRAEELEEELDRIMESREHEKQDADERIHQLELELQDAHARAEEEIQKATDLTAYTQTLKDAEESLRIRIEELEKQESERRERERESNQALQAAFMNLSPGGSVPVDTPSIVKAIEVLSEGLSIHAKNAEESSAKAVAESKELGERLSQLESEAEELRKTSEMRASELSLVKEELAQEKTRLENVASDLDDERSKFIALQSKLASGETGSDALQERVIEEERKLADLSQRLNEVEAQARKAEGEVLVWKERVEAMAETEQHAAGRVETCGTRSQELSKQLFRQVEKVEHMLEQLGFTVVRQNGDIVVQRSSKVTALSSTAESLSQSGVVSVRPDPTLLDWMHADTSQEETDRFMAFMESLYQFDVDIFSDAIVKRVKDIEVLARKWQKEARGYRDKYHRTQSEAHDKIAYRSFKEGDLALFLPTRNQAIRSWAAFNVGAPHYFLREQDVHKLHTRDWLLARITKIEERVVDLSKSMNGANPDRRSIGEASDGTSFDDENPFELSDGLRWYLLDAMEEKPGAPATPGLGKSTVAPAHVDARGSIRLKRTSAGGNVARTLSKSLDSRRNSSNSKKGPATPSQRGNDSTTDLARQADADSTTATAGSQPREAAPTSEEVRRDQLQGP</sequence>
<proteinExistence type="inferred from homology"/>
<feature type="chain" id="PRO_0000458853" description="Autophagy-related protein 11">
    <location>
        <begin position="1"/>
        <end position="1201"/>
    </location>
</feature>
<feature type="region of interest" description="Disordered" evidence="3">
    <location>
        <begin position="90"/>
        <end position="109"/>
    </location>
</feature>
<feature type="region of interest" description="Disordered" evidence="3">
    <location>
        <begin position="458"/>
        <end position="503"/>
    </location>
</feature>
<feature type="region of interest" description="Disordered" evidence="3">
    <location>
        <begin position="525"/>
        <end position="545"/>
    </location>
</feature>
<feature type="region of interest" description="Disordered" evidence="3">
    <location>
        <begin position="1052"/>
        <end position="1076"/>
    </location>
</feature>
<feature type="region of interest" description="Disordered" evidence="3">
    <location>
        <begin position="1115"/>
        <end position="1201"/>
    </location>
</feature>
<feature type="coiled-coil region" evidence="2">
    <location>
        <begin position="418"/>
        <end position="452"/>
    </location>
</feature>
<feature type="coiled-coil region" evidence="2">
    <location>
        <begin position="566"/>
        <end position="670"/>
    </location>
</feature>
<feature type="coiled-coil region" evidence="2">
    <location>
        <begin position="710"/>
        <end position="828"/>
    </location>
</feature>
<feature type="compositionally biased region" description="Polar residues" evidence="3">
    <location>
        <begin position="97"/>
        <end position="109"/>
    </location>
</feature>
<feature type="compositionally biased region" description="Low complexity" evidence="3">
    <location>
        <begin position="485"/>
        <end position="499"/>
    </location>
</feature>
<feature type="compositionally biased region" description="Basic and acidic residues" evidence="3">
    <location>
        <begin position="525"/>
        <end position="542"/>
    </location>
</feature>
<feature type="compositionally biased region" description="Polar residues" evidence="3">
    <location>
        <begin position="1133"/>
        <end position="1166"/>
    </location>
</feature>
<feature type="compositionally biased region" description="Basic and acidic residues" evidence="3">
    <location>
        <begin position="1191"/>
        <end position="1201"/>
    </location>
</feature>
<dbReference type="EMBL" id="LC000685">
    <property type="protein sequence ID" value="BAP46866.1"/>
    <property type="status" value="ALT_INIT"/>
    <property type="molecule type" value="Genomic_DNA"/>
</dbReference>
<dbReference type="EMBL" id="BA000050">
    <property type="protein sequence ID" value="BAE57863.1"/>
    <property type="molecule type" value="Genomic_DNA"/>
</dbReference>
<dbReference type="SMR" id="Q2UKQ2"/>
<dbReference type="STRING" id="510516.Q2UKQ2"/>
<dbReference type="EnsemblFungi" id="BAE57863">
    <property type="protein sequence ID" value="BAE57863"/>
    <property type="gene ID" value="AO090003000718"/>
</dbReference>
<dbReference type="VEuPathDB" id="FungiDB:AO090003000718"/>
<dbReference type="HOGENOM" id="CLU_002803_1_0_1"/>
<dbReference type="Proteomes" id="UP000006564">
    <property type="component" value="Chromosome 2"/>
</dbReference>
<dbReference type="GO" id="GO:1990316">
    <property type="term" value="C:Atg1/ULK1 kinase complex"/>
    <property type="evidence" value="ECO:0007669"/>
    <property type="project" value="TreeGrafter"/>
</dbReference>
<dbReference type="GO" id="GO:0034045">
    <property type="term" value="C:phagophore assembly site membrane"/>
    <property type="evidence" value="ECO:0007669"/>
    <property type="project" value="UniProtKB-SubCell"/>
</dbReference>
<dbReference type="GO" id="GO:0060090">
    <property type="term" value="F:molecular adaptor activity"/>
    <property type="evidence" value="ECO:0007669"/>
    <property type="project" value="TreeGrafter"/>
</dbReference>
<dbReference type="GO" id="GO:0019901">
    <property type="term" value="F:protein kinase binding"/>
    <property type="evidence" value="ECO:0007669"/>
    <property type="project" value="TreeGrafter"/>
</dbReference>
<dbReference type="GO" id="GO:0000045">
    <property type="term" value="P:autophagosome assembly"/>
    <property type="evidence" value="ECO:0007669"/>
    <property type="project" value="InterPro"/>
</dbReference>
<dbReference type="GO" id="GO:0000422">
    <property type="term" value="P:autophagy of mitochondrion"/>
    <property type="evidence" value="ECO:0007669"/>
    <property type="project" value="TreeGrafter"/>
</dbReference>
<dbReference type="GO" id="GO:0034727">
    <property type="term" value="P:piecemeal microautophagy of the nucleus"/>
    <property type="evidence" value="ECO:0007669"/>
    <property type="project" value="TreeGrafter"/>
</dbReference>
<dbReference type="GO" id="GO:0015031">
    <property type="term" value="P:protein transport"/>
    <property type="evidence" value="ECO:0007669"/>
    <property type="project" value="UniProtKB-KW"/>
</dbReference>
<dbReference type="GO" id="GO:0061709">
    <property type="term" value="P:reticulophagy"/>
    <property type="evidence" value="ECO:0007669"/>
    <property type="project" value="TreeGrafter"/>
</dbReference>
<dbReference type="GO" id="GO:0034517">
    <property type="term" value="P:ribophagy"/>
    <property type="evidence" value="ECO:0007669"/>
    <property type="project" value="TreeGrafter"/>
</dbReference>
<dbReference type="Gene3D" id="1.20.5.170">
    <property type="match status" value="1"/>
</dbReference>
<dbReference type="InterPro" id="IPR040040">
    <property type="entry name" value="ATG11"/>
</dbReference>
<dbReference type="InterPro" id="IPR019460">
    <property type="entry name" value="Atg11_C"/>
</dbReference>
<dbReference type="InterPro" id="IPR045326">
    <property type="entry name" value="ATG17-like_dom"/>
</dbReference>
<dbReference type="PANTHER" id="PTHR13222">
    <property type="entry name" value="RB1-INDUCIBLE COILED-COIL"/>
    <property type="match status" value="1"/>
</dbReference>
<dbReference type="PANTHER" id="PTHR13222:SF1">
    <property type="entry name" value="RB1-INDUCIBLE COILED-COIL PROTEIN 1"/>
    <property type="match status" value="1"/>
</dbReference>
<dbReference type="Pfam" id="PF10377">
    <property type="entry name" value="ATG11"/>
    <property type="match status" value="1"/>
</dbReference>
<dbReference type="Pfam" id="PF04108">
    <property type="entry name" value="ATG17_like"/>
    <property type="match status" value="1"/>
</dbReference>
<dbReference type="SUPFAM" id="SSF57997">
    <property type="entry name" value="Tropomyosin"/>
    <property type="match status" value="1"/>
</dbReference>
<evidence type="ECO:0000250" key="1">
    <source>
        <dbReference type="UniProtKB" id="Q12527"/>
    </source>
</evidence>
<evidence type="ECO:0000255" key="2"/>
<evidence type="ECO:0000256" key="3">
    <source>
        <dbReference type="SAM" id="MobiDB-lite"/>
    </source>
</evidence>
<evidence type="ECO:0000269" key="4">
    <source>
    </source>
</evidence>
<evidence type="ECO:0000303" key="5">
    <source>
    </source>
</evidence>
<evidence type="ECO:0000305" key="6"/>
<gene>
    <name evidence="5" type="primary">atg11</name>
    <name type="ORF">AO090003000718</name>
</gene>
<protein>
    <recommendedName>
        <fullName evidence="5">Autophagy-related protein 11</fullName>
    </recommendedName>
</protein>